<accession>A7HI48</accession>
<reference key="1">
    <citation type="journal article" date="2015" name="Genome Announc.">
        <title>Complete genome sequence of Anaeromyxobacter sp. Fw109-5, an anaerobic, metal-reducing bacterium isolated from a contaminated subsurface environment.</title>
        <authorList>
            <person name="Hwang C."/>
            <person name="Copeland A."/>
            <person name="Lucas S."/>
            <person name="Lapidus A."/>
            <person name="Barry K."/>
            <person name="Glavina Del Rio T."/>
            <person name="Dalin E."/>
            <person name="Tice H."/>
            <person name="Pitluck S."/>
            <person name="Sims D."/>
            <person name="Brettin T."/>
            <person name="Bruce D.C."/>
            <person name="Detter J.C."/>
            <person name="Han C.S."/>
            <person name="Schmutz J."/>
            <person name="Larimer F.W."/>
            <person name="Land M.L."/>
            <person name="Hauser L.J."/>
            <person name="Kyrpides N."/>
            <person name="Lykidis A."/>
            <person name="Richardson P."/>
            <person name="Belieav A."/>
            <person name="Sanford R.A."/>
            <person name="Loeffler F.E."/>
            <person name="Fields M.W."/>
        </authorList>
    </citation>
    <scope>NUCLEOTIDE SEQUENCE [LARGE SCALE GENOMIC DNA]</scope>
    <source>
        <strain>Fw109-5</strain>
    </source>
</reference>
<name>HIS1_ANADF</name>
<dbReference type="EC" id="2.4.2.17" evidence="1"/>
<dbReference type="EMBL" id="CP000769">
    <property type="protein sequence ID" value="ABS28394.1"/>
    <property type="molecule type" value="Genomic_DNA"/>
</dbReference>
<dbReference type="RefSeq" id="WP_012099037.1">
    <property type="nucleotide sequence ID" value="NC_009675.1"/>
</dbReference>
<dbReference type="SMR" id="A7HI48"/>
<dbReference type="STRING" id="404589.Anae109_4216"/>
<dbReference type="KEGG" id="afw:Anae109_4216"/>
<dbReference type="eggNOG" id="COG0040">
    <property type="taxonomic scope" value="Bacteria"/>
</dbReference>
<dbReference type="HOGENOM" id="CLU_038115_2_0_7"/>
<dbReference type="OrthoDB" id="9801867at2"/>
<dbReference type="UniPathway" id="UPA00031">
    <property type="reaction ID" value="UER00006"/>
</dbReference>
<dbReference type="Proteomes" id="UP000006382">
    <property type="component" value="Chromosome"/>
</dbReference>
<dbReference type="GO" id="GO:0005737">
    <property type="term" value="C:cytoplasm"/>
    <property type="evidence" value="ECO:0007669"/>
    <property type="project" value="UniProtKB-SubCell"/>
</dbReference>
<dbReference type="GO" id="GO:0005524">
    <property type="term" value="F:ATP binding"/>
    <property type="evidence" value="ECO:0007669"/>
    <property type="project" value="UniProtKB-KW"/>
</dbReference>
<dbReference type="GO" id="GO:0003879">
    <property type="term" value="F:ATP phosphoribosyltransferase activity"/>
    <property type="evidence" value="ECO:0007669"/>
    <property type="project" value="UniProtKB-UniRule"/>
</dbReference>
<dbReference type="GO" id="GO:0000105">
    <property type="term" value="P:L-histidine biosynthetic process"/>
    <property type="evidence" value="ECO:0007669"/>
    <property type="project" value="UniProtKB-UniRule"/>
</dbReference>
<dbReference type="CDD" id="cd13595">
    <property type="entry name" value="PBP2_HisGs"/>
    <property type="match status" value="1"/>
</dbReference>
<dbReference type="Gene3D" id="3.40.190.10">
    <property type="entry name" value="Periplasmic binding protein-like II"/>
    <property type="match status" value="2"/>
</dbReference>
<dbReference type="HAMAP" id="MF_01018">
    <property type="entry name" value="HisG_Short"/>
    <property type="match status" value="1"/>
</dbReference>
<dbReference type="InterPro" id="IPR013820">
    <property type="entry name" value="ATP_PRibTrfase_cat"/>
</dbReference>
<dbReference type="InterPro" id="IPR018198">
    <property type="entry name" value="ATP_PRibTrfase_CS"/>
</dbReference>
<dbReference type="InterPro" id="IPR001348">
    <property type="entry name" value="ATP_PRibTrfase_HisG"/>
</dbReference>
<dbReference type="InterPro" id="IPR024893">
    <property type="entry name" value="ATP_PRibTrfase_HisG_short"/>
</dbReference>
<dbReference type="NCBIfam" id="TIGR00070">
    <property type="entry name" value="hisG"/>
    <property type="match status" value="1"/>
</dbReference>
<dbReference type="PANTHER" id="PTHR21403:SF8">
    <property type="entry name" value="ATP PHOSPHORIBOSYLTRANSFERASE"/>
    <property type="match status" value="1"/>
</dbReference>
<dbReference type="PANTHER" id="PTHR21403">
    <property type="entry name" value="ATP PHOSPHORIBOSYLTRANSFERASE ATP-PRTASE"/>
    <property type="match status" value="1"/>
</dbReference>
<dbReference type="Pfam" id="PF01634">
    <property type="entry name" value="HisG"/>
    <property type="match status" value="1"/>
</dbReference>
<dbReference type="SUPFAM" id="SSF53850">
    <property type="entry name" value="Periplasmic binding protein-like II"/>
    <property type="match status" value="1"/>
</dbReference>
<dbReference type="PROSITE" id="PS01316">
    <property type="entry name" value="ATP_P_PHORIBOSYLTR"/>
    <property type="match status" value="1"/>
</dbReference>
<sequence>MNGEIITVAVPKGRLLEESSALFERALGVSPKRLLDGTRKLAADAPEAGLRFISIRAADVASYVEHGAAAVGIVGLDILREEPRDLYEPLDLGIGRCQVIVARHKQAKPLPRGVAPRVATKYLSLAAHHFARKGIPAEIIPLHGSIEVAPSLGLADAIVDITETGETLRANGLVIEELVLDVSARLVVNRVALKLHAERLRRLIEALRRVCAETATPKVR</sequence>
<comment type="function">
    <text evidence="1">Catalyzes the condensation of ATP and 5-phosphoribose 1-diphosphate to form N'-(5'-phosphoribosyl)-ATP (PR-ATP). Has a crucial role in the pathway because the rate of histidine biosynthesis seems to be controlled primarily by regulation of HisG enzymatic activity.</text>
</comment>
<comment type="catalytic activity">
    <reaction evidence="1">
        <text>1-(5-phospho-beta-D-ribosyl)-ATP + diphosphate = 5-phospho-alpha-D-ribose 1-diphosphate + ATP</text>
        <dbReference type="Rhea" id="RHEA:18473"/>
        <dbReference type="ChEBI" id="CHEBI:30616"/>
        <dbReference type="ChEBI" id="CHEBI:33019"/>
        <dbReference type="ChEBI" id="CHEBI:58017"/>
        <dbReference type="ChEBI" id="CHEBI:73183"/>
        <dbReference type="EC" id="2.4.2.17"/>
    </reaction>
</comment>
<comment type="pathway">
    <text evidence="1">Amino-acid biosynthesis; L-histidine biosynthesis; L-histidine from 5-phospho-alpha-D-ribose 1-diphosphate: step 1/9.</text>
</comment>
<comment type="subunit">
    <text evidence="1">Heteromultimer composed of HisG and HisZ subunits.</text>
</comment>
<comment type="subcellular location">
    <subcellularLocation>
        <location evidence="1">Cytoplasm</location>
    </subcellularLocation>
</comment>
<comment type="domain">
    <text>Lacks the C-terminal regulatory region which is replaced by HisZ.</text>
</comment>
<comment type="similarity">
    <text evidence="1">Belongs to the ATP phosphoribosyltransferase family. Short subfamily.</text>
</comment>
<protein>
    <recommendedName>
        <fullName evidence="1">ATP phosphoribosyltransferase</fullName>
        <shortName evidence="1">ATP-PRT</shortName>
        <shortName evidence="1">ATP-PRTase</shortName>
        <ecNumber evidence="1">2.4.2.17</ecNumber>
    </recommendedName>
</protein>
<keyword id="KW-0028">Amino-acid biosynthesis</keyword>
<keyword id="KW-0067">ATP-binding</keyword>
<keyword id="KW-0963">Cytoplasm</keyword>
<keyword id="KW-0328">Glycosyltransferase</keyword>
<keyword id="KW-0368">Histidine biosynthesis</keyword>
<keyword id="KW-0547">Nucleotide-binding</keyword>
<keyword id="KW-1185">Reference proteome</keyword>
<keyword id="KW-0808">Transferase</keyword>
<proteinExistence type="inferred from homology"/>
<evidence type="ECO:0000255" key="1">
    <source>
        <dbReference type="HAMAP-Rule" id="MF_01018"/>
    </source>
</evidence>
<organism>
    <name type="scientific">Anaeromyxobacter sp. (strain Fw109-5)</name>
    <dbReference type="NCBI Taxonomy" id="404589"/>
    <lineage>
        <taxon>Bacteria</taxon>
        <taxon>Pseudomonadati</taxon>
        <taxon>Myxococcota</taxon>
        <taxon>Myxococcia</taxon>
        <taxon>Myxococcales</taxon>
        <taxon>Cystobacterineae</taxon>
        <taxon>Anaeromyxobacteraceae</taxon>
        <taxon>Anaeromyxobacter</taxon>
    </lineage>
</organism>
<feature type="chain" id="PRO_1000063262" description="ATP phosphoribosyltransferase">
    <location>
        <begin position="1"/>
        <end position="220"/>
    </location>
</feature>
<gene>
    <name evidence="1" type="primary">hisG</name>
    <name type="ordered locus">Anae109_4216</name>
</gene>